<comment type="catalytic activity">
    <reaction evidence="1">
        <text>5-amino-1-(5-phospho-D-ribosyl)imidazole-4-carboxylate + L-aspartate + ATP = (2S)-2-[5-amino-1-(5-phospho-beta-D-ribosyl)imidazole-4-carboxamido]succinate + ADP + phosphate + 2 H(+)</text>
        <dbReference type="Rhea" id="RHEA:22628"/>
        <dbReference type="ChEBI" id="CHEBI:15378"/>
        <dbReference type="ChEBI" id="CHEBI:29991"/>
        <dbReference type="ChEBI" id="CHEBI:30616"/>
        <dbReference type="ChEBI" id="CHEBI:43474"/>
        <dbReference type="ChEBI" id="CHEBI:58443"/>
        <dbReference type="ChEBI" id="CHEBI:77657"/>
        <dbReference type="ChEBI" id="CHEBI:456216"/>
        <dbReference type="EC" id="6.3.2.6"/>
    </reaction>
</comment>
<comment type="pathway">
    <text evidence="1">Purine metabolism; IMP biosynthesis via de novo pathway; 5-amino-1-(5-phospho-D-ribosyl)imidazole-4-carboxamide from 5-amino-1-(5-phospho-D-ribosyl)imidazole-4-carboxylate: step 1/2.</text>
</comment>
<comment type="similarity">
    <text evidence="1">Belongs to the SAICAR synthetase family.</text>
</comment>
<gene>
    <name evidence="1" type="primary">purC</name>
    <name type="ordered locus">GSU2091</name>
</gene>
<accession>Q74BF0</accession>
<keyword id="KW-0067">ATP-binding</keyword>
<keyword id="KW-0436">Ligase</keyword>
<keyword id="KW-0547">Nucleotide-binding</keyword>
<keyword id="KW-0658">Purine biosynthesis</keyword>
<keyword id="KW-1185">Reference proteome</keyword>
<sequence>MAELVLKTDFPDLKLAGRGKVRDIYDLGDALLIVTTDRISAFDVIMNEAIPDKGYVLTQISSFWFRQMEDIIPNHIISTDVKDFPAECQKYAAQLEGRSMLVKKAKPLPVECIVRGYISGSGWKDYKATGAICGITLPAGLVESDKLEEPIFTPSTKAELGEHDENISFDKCVELIGRELAEKIRDVTIAIYKRARDIADTKGIIIADTKFEYGIYNGELIIIDECMTPDSSRFWPKDSYKPGGAQPSFDKQFLRDYLETLDWGKTAPAPPLPEEIVRKTGEKYMEALVRLTGKGK</sequence>
<dbReference type="EC" id="6.3.2.6" evidence="1"/>
<dbReference type="EMBL" id="AE017180">
    <property type="protein sequence ID" value="AAR35467.1"/>
    <property type="molecule type" value="Genomic_DNA"/>
</dbReference>
<dbReference type="RefSeq" id="NP_953140.1">
    <property type="nucleotide sequence ID" value="NC_002939.5"/>
</dbReference>
<dbReference type="RefSeq" id="WP_010942733.1">
    <property type="nucleotide sequence ID" value="NC_002939.5"/>
</dbReference>
<dbReference type="SMR" id="Q74BF0"/>
<dbReference type="FunCoup" id="Q74BF0">
    <property type="interactions" value="497"/>
</dbReference>
<dbReference type="STRING" id="243231.GSU2091"/>
<dbReference type="EnsemblBacteria" id="AAR35467">
    <property type="protein sequence ID" value="AAR35467"/>
    <property type="gene ID" value="GSU2091"/>
</dbReference>
<dbReference type="KEGG" id="gsu:GSU2091"/>
<dbReference type="PATRIC" id="fig|243231.5.peg.2127"/>
<dbReference type="eggNOG" id="COG0152">
    <property type="taxonomic scope" value="Bacteria"/>
</dbReference>
<dbReference type="HOGENOM" id="CLU_045637_0_0_7"/>
<dbReference type="InParanoid" id="Q74BF0"/>
<dbReference type="OrthoDB" id="9801549at2"/>
<dbReference type="UniPathway" id="UPA00074">
    <property type="reaction ID" value="UER00131"/>
</dbReference>
<dbReference type="Proteomes" id="UP000000577">
    <property type="component" value="Chromosome"/>
</dbReference>
<dbReference type="GO" id="GO:0005524">
    <property type="term" value="F:ATP binding"/>
    <property type="evidence" value="ECO:0007669"/>
    <property type="project" value="UniProtKB-KW"/>
</dbReference>
<dbReference type="GO" id="GO:0004639">
    <property type="term" value="F:phosphoribosylaminoimidazolesuccinocarboxamide synthase activity"/>
    <property type="evidence" value="ECO:0000318"/>
    <property type="project" value="GO_Central"/>
</dbReference>
<dbReference type="GO" id="GO:0006189">
    <property type="term" value="P:'de novo' IMP biosynthetic process"/>
    <property type="evidence" value="ECO:0000318"/>
    <property type="project" value="GO_Central"/>
</dbReference>
<dbReference type="CDD" id="cd01414">
    <property type="entry name" value="SAICAR_synt_Sc"/>
    <property type="match status" value="1"/>
</dbReference>
<dbReference type="FunFam" id="3.30.200.20:FF:000392">
    <property type="entry name" value="Phosphoribosylaminoimidazole-succinocarboxamide synthase"/>
    <property type="match status" value="1"/>
</dbReference>
<dbReference type="FunFam" id="3.30.470.20:FF:000015">
    <property type="entry name" value="Phosphoribosylaminoimidazole-succinocarboxamide synthase"/>
    <property type="match status" value="1"/>
</dbReference>
<dbReference type="Gene3D" id="3.30.470.20">
    <property type="entry name" value="ATP-grasp fold, B domain"/>
    <property type="match status" value="1"/>
</dbReference>
<dbReference type="Gene3D" id="3.30.200.20">
    <property type="entry name" value="Phosphorylase Kinase, domain 1"/>
    <property type="match status" value="1"/>
</dbReference>
<dbReference type="HAMAP" id="MF_00137">
    <property type="entry name" value="SAICAR_synth"/>
    <property type="match status" value="1"/>
</dbReference>
<dbReference type="InterPro" id="IPR028923">
    <property type="entry name" value="SAICAR_synt/ADE2_N"/>
</dbReference>
<dbReference type="InterPro" id="IPR001636">
    <property type="entry name" value="SAICAR_synth"/>
</dbReference>
<dbReference type="InterPro" id="IPR018236">
    <property type="entry name" value="SAICAR_synthetase_CS"/>
</dbReference>
<dbReference type="NCBIfam" id="NF010568">
    <property type="entry name" value="PRK13961.1"/>
    <property type="match status" value="1"/>
</dbReference>
<dbReference type="NCBIfam" id="TIGR00081">
    <property type="entry name" value="purC"/>
    <property type="match status" value="1"/>
</dbReference>
<dbReference type="PANTHER" id="PTHR43700">
    <property type="entry name" value="PHOSPHORIBOSYLAMINOIMIDAZOLE-SUCCINOCARBOXAMIDE SYNTHASE"/>
    <property type="match status" value="1"/>
</dbReference>
<dbReference type="PANTHER" id="PTHR43700:SF1">
    <property type="entry name" value="PHOSPHORIBOSYLAMINOIMIDAZOLE-SUCCINOCARBOXAMIDE SYNTHASE"/>
    <property type="match status" value="1"/>
</dbReference>
<dbReference type="Pfam" id="PF01259">
    <property type="entry name" value="SAICAR_synt"/>
    <property type="match status" value="1"/>
</dbReference>
<dbReference type="SUPFAM" id="SSF56104">
    <property type="entry name" value="SAICAR synthase-like"/>
    <property type="match status" value="1"/>
</dbReference>
<dbReference type="PROSITE" id="PS01057">
    <property type="entry name" value="SAICAR_SYNTHETASE_1"/>
    <property type="match status" value="1"/>
</dbReference>
<feature type="chain" id="PRO_1000018708" description="Phosphoribosylaminoimidazole-succinocarboxamide synthase">
    <location>
        <begin position="1"/>
        <end position="296"/>
    </location>
</feature>
<organism>
    <name type="scientific">Geobacter sulfurreducens (strain ATCC 51573 / DSM 12127 / PCA)</name>
    <dbReference type="NCBI Taxonomy" id="243231"/>
    <lineage>
        <taxon>Bacteria</taxon>
        <taxon>Pseudomonadati</taxon>
        <taxon>Thermodesulfobacteriota</taxon>
        <taxon>Desulfuromonadia</taxon>
        <taxon>Geobacterales</taxon>
        <taxon>Geobacteraceae</taxon>
        <taxon>Geobacter</taxon>
    </lineage>
</organism>
<reference key="1">
    <citation type="journal article" date="2003" name="Science">
        <title>Genome of Geobacter sulfurreducens: metal reduction in subsurface environments.</title>
        <authorList>
            <person name="Methe B.A."/>
            <person name="Nelson K.E."/>
            <person name="Eisen J.A."/>
            <person name="Paulsen I.T."/>
            <person name="Nelson W.C."/>
            <person name="Heidelberg J.F."/>
            <person name="Wu D."/>
            <person name="Wu M."/>
            <person name="Ward N.L."/>
            <person name="Beanan M.J."/>
            <person name="Dodson R.J."/>
            <person name="Madupu R."/>
            <person name="Brinkac L.M."/>
            <person name="Daugherty S.C."/>
            <person name="DeBoy R.T."/>
            <person name="Durkin A.S."/>
            <person name="Gwinn M.L."/>
            <person name="Kolonay J.F."/>
            <person name="Sullivan S.A."/>
            <person name="Haft D.H."/>
            <person name="Selengut J."/>
            <person name="Davidsen T.M."/>
            <person name="Zafar N."/>
            <person name="White O."/>
            <person name="Tran B."/>
            <person name="Romero C."/>
            <person name="Forberger H.A."/>
            <person name="Weidman J.F."/>
            <person name="Khouri H.M."/>
            <person name="Feldblyum T.V."/>
            <person name="Utterback T.R."/>
            <person name="Van Aken S.E."/>
            <person name="Lovley D.R."/>
            <person name="Fraser C.M."/>
        </authorList>
    </citation>
    <scope>NUCLEOTIDE SEQUENCE [LARGE SCALE GENOMIC DNA]</scope>
    <source>
        <strain>ATCC 51573 / DSM 12127 / PCA</strain>
    </source>
</reference>
<name>PUR7_GEOSL</name>
<proteinExistence type="inferred from homology"/>
<protein>
    <recommendedName>
        <fullName evidence="1">Phosphoribosylaminoimidazole-succinocarboxamide synthase</fullName>
        <ecNumber evidence="1">6.3.2.6</ecNumber>
    </recommendedName>
    <alternativeName>
        <fullName evidence="1">SAICAR synthetase</fullName>
    </alternativeName>
</protein>
<evidence type="ECO:0000255" key="1">
    <source>
        <dbReference type="HAMAP-Rule" id="MF_00137"/>
    </source>
</evidence>